<gene>
    <name type="primary">NOP16</name>
    <name type="ordered locus">CAGL0J02222g</name>
</gene>
<accession>Q76IQ1</accession>
<accession>Q6FPP3</accession>
<evidence type="ECO:0000250" key="1"/>
<evidence type="ECO:0000256" key="2">
    <source>
        <dbReference type="SAM" id="MobiDB-lite"/>
    </source>
</evidence>
<evidence type="ECO:0000305" key="3"/>
<name>NOP16_CANGA</name>
<sequence length="238" mass="27505">MTSVRKRKMNRSSVKKVSRRNKDKQKKKLIACNPIIAKNWDYSLTLAQNYEKLGLKAKLQTPAGGQEAKYDTVIKKEATIDPVTQFGEDSDSDSEEDSSNSQEDNEGQNVEDIDENEIPEGEARIIRDAEGNVVKVVYGKKKVFDIDDDIDTIKAKLADQQKEETEVVKQLEAFASRPIVKKERVQSPREVEWLEKLYKKHGDNYKAMFFDRKLNIYQQSEGEIKRKMRKWKSENNIA</sequence>
<reference key="1">
    <citation type="submission" date="2002-11" db="EMBL/GenBank/DDBJ databases">
        <title>Isolation of the Candida glabrata PMI1 encoding phosphomannose isomerase gene.</title>
        <authorList>
            <person name="Nakayama H."/>
            <person name="Ohta A."/>
            <person name="Arisawa M."/>
            <person name="Sudoh M."/>
        </authorList>
    </citation>
    <scope>NUCLEOTIDE SEQUENCE [GENOMIC DNA]</scope>
    <source>
        <strain>ATCC 2001 / BCRC 20586 / JCM 3761 / NBRC 0622 / NRRL Y-65 / CBS 138</strain>
    </source>
</reference>
<reference key="2">
    <citation type="journal article" date="2004" name="Nature">
        <title>Genome evolution in yeasts.</title>
        <authorList>
            <person name="Dujon B."/>
            <person name="Sherman D."/>
            <person name="Fischer G."/>
            <person name="Durrens P."/>
            <person name="Casaregola S."/>
            <person name="Lafontaine I."/>
            <person name="de Montigny J."/>
            <person name="Marck C."/>
            <person name="Neuveglise C."/>
            <person name="Talla E."/>
            <person name="Goffard N."/>
            <person name="Frangeul L."/>
            <person name="Aigle M."/>
            <person name="Anthouard V."/>
            <person name="Babour A."/>
            <person name="Barbe V."/>
            <person name="Barnay S."/>
            <person name="Blanchin S."/>
            <person name="Beckerich J.-M."/>
            <person name="Beyne E."/>
            <person name="Bleykasten C."/>
            <person name="Boisrame A."/>
            <person name="Boyer J."/>
            <person name="Cattolico L."/>
            <person name="Confanioleri F."/>
            <person name="de Daruvar A."/>
            <person name="Despons L."/>
            <person name="Fabre E."/>
            <person name="Fairhead C."/>
            <person name="Ferry-Dumazet H."/>
            <person name="Groppi A."/>
            <person name="Hantraye F."/>
            <person name="Hennequin C."/>
            <person name="Jauniaux N."/>
            <person name="Joyet P."/>
            <person name="Kachouri R."/>
            <person name="Kerrest A."/>
            <person name="Koszul R."/>
            <person name="Lemaire M."/>
            <person name="Lesur I."/>
            <person name="Ma L."/>
            <person name="Muller H."/>
            <person name="Nicaud J.-M."/>
            <person name="Nikolski M."/>
            <person name="Oztas S."/>
            <person name="Ozier-Kalogeropoulos O."/>
            <person name="Pellenz S."/>
            <person name="Potier S."/>
            <person name="Richard G.-F."/>
            <person name="Straub M.-L."/>
            <person name="Suleau A."/>
            <person name="Swennen D."/>
            <person name="Tekaia F."/>
            <person name="Wesolowski-Louvel M."/>
            <person name="Westhof E."/>
            <person name="Wirth B."/>
            <person name="Zeniou-Meyer M."/>
            <person name="Zivanovic Y."/>
            <person name="Bolotin-Fukuhara M."/>
            <person name="Thierry A."/>
            <person name="Bouchier C."/>
            <person name="Caudron B."/>
            <person name="Scarpelli C."/>
            <person name="Gaillardin C."/>
            <person name="Weissenbach J."/>
            <person name="Wincker P."/>
            <person name="Souciet J.-L."/>
        </authorList>
    </citation>
    <scope>NUCLEOTIDE SEQUENCE [LARGE SCALE GENOMIC DNA]</scope>
    <source>
        <strain>ATCC 2001 / BCRC 20586 / JCM 3761 / NBRC 0622 / NRRL Y-65 / CBS 138</strain>
    </source>
</reference>
<organism>
    <name type="scientific">Candida glabrata (strain ATCC 2001 / BCRC 20586 / JCM 3761 / NBRC 0622 / NRRL Y-65 / CBS 138)</name>
    <name type="common">Yeast</name>
    <name type="synonym">Nakaseomyces glabratus</name>
    <dbReference type="NCBI Taxonomy" id="284593"/>
    <lineage>
        <taxon>Eukaryota</taxon>
        <taxon>Fungi</taxon>
        <taxon>Dikarya</taxon>
        <taxon>Ascomycota</taxon>
        <taxon>Saccharomycotina</taxon>
        <taxon>Saccharomycetes</taxon>
        <taxon>Saccharomycetales</taxon>
        <taxon>Saccharomycetaceae</taxon>
        <taxon>Nakaseomyces</taxon>
    </lineage>
</organism>
<protein>
    <recommendedName>
        <fullName>Nucleolar protein 16</fullName>
    </recommendedName>
</protein>
<keyword id="KW-0539">Nucleus</keyword>
<keyword id="KW-1185">Reference proteome</keyword>
<keyword id="KW-0687">Ribonucleoprotein</keyword>
<keyword id="KW-0690">Ribosome biogenesis</keyword>
<keyword id="KW-0698">rRNA processing</keyword>
<comment type="function">
    <text evidence="1">Involved in the biogenesis of the 60S ribosomal subunit.</text>
</comment>
<comment type="subunit">
    <text evidence="1">Component of the pre-66S ribosomal particle.</text>
</comment>
<comment type="subcellular location">
    <subcellularLocation>
        <location evidence="1">Nucleus</location>
        <location evidence="1">Nucleolus</location>
    </subcellularLocation>
</comment>
<comment type="similarity">
    <text evidence="3">Belongs to the NOP16 family.</text>
</comment>
<feature type="chain" id="PRO_0000320372" description="Nucleolar protein 16">
    <location>
        <begin position="1"/>
        <end position="238"/>
    </location>
</feature>
<feature type="region of interest" description="Disordered" evidence="2">
    <location>
        <begin position="1"/>
        <end position="26"/>
    </location>
</feature>
<feature type="region of interest" description="Disordered" evidence="2">
    <location>
        <begin position="80"/>
        <end position="122"/>
    </location>
</feature>
<feature type="compositionally biased region" description="Acidic residues" evidence="2">
    <location>
        <begin position="88"/>
        <end position="120"/>
    </location>
</feature>
<proteinExistence type="inferred from homology"/>
<dbReference type="EMBL" id="AB097082">
    <property type="protein sequence ID" value="BAD02471.1"/>
    <property type="molecule type" value="Genomic_DNA"/>
</dbReference>
<dbReference type="EMBL" id="CR380956">
    <property type="protein sequence ID" value="CAG60750.1"/>
    <property type="molecule type" value="Genomic_DNA"/>
</dbReference>
<dbReference type="RefSeq" id="XP_447801.1">
    <property type="nucleotide sequence ID" value="XM_447801.1"/>
</dbReference>
<dbReference type="SMR" id="Q76IQ1"/>
<dbReference type="FunCoup" id="Q76IQ1">
    <property type="interactions" value="336"/>
</dbReference>
<dbReference type="STRING" id="284593.Q76IQ1"/>
<dbReference type="EnsemblFungi" id="CAGL0J02222g-T">
    <property type="protein sequence ID" value="CAGL0J02222g-T-p1"/>
    <property type="gene ID" value="CAGL0J02222g"/>
</dbReference>
<dbReference type="KEGG" id="cgr:2889793"/>
<dbReference type="CGD" id="CAL0133066">
    <property type="gene designation" value="CAGL0J02222g"/>
</dbReference>
<dbReference type="VEuPathDB" id="FungiDB:B1J91_J02222g"/>
<dbReference type="VEuPathDB" id="FungiDB:CAGL0J02222g"/>
<dbReference type="eggNOG" id="KOG4771">
    <property type="taxonomic scope" value="Eukaryota"/>
</dbReference>
<dbReference type="HOGENOM" id="CLU_078857_0_0_1"/>
<dbReference type="InParanoid" id="Q76IQ1"/>
<dbReference type="OMA" id="MQQTEAD"/>
<dbReference type="Proteomes" id="UP000002428">
    <property type="component" value="Chromosome J"/>
</dbReference>
<dbReference type="GO" id="GO:0005730">
    <property type="term" value="C:nucleolus"/>
    <property type="evidence" value="ECO:0007669"/>
    <property type="project" value="UniProtKB-SubCell"/>
</dbReference>
<dbReference type="GO" id="GO:0030687">
    <property type="term" value="C:preribosome, large subunit precursor"/>
    <property type="evidence" value="ECO:0007669"/>
    <property type="project" value="EnsemblFungi"/>
</dbReference>
<dbReference type="GO" id="GO:0042273">
    <property type="term" value="P:ribosomal large subunit biogenesis"/>
    <property type="evidence" value="ECO:0007669"/>
    <property type="project" value="EnsemblFungi"/>
</dbReference>
<dbReference type="GO" id="GO:0006364">
    <property type="term" value="P:rRNA processing"/>
    <property type="evidence" value="ECO:0007669"/>
    <property type="project" value="UniProtKB-KW"/>
</dbReference>
<dbReference type="InterPro" id="IPR019002">
    <property type="entry name" value="Ribosome_biogenesis_Nop16"/>
</dbReference>
<dbReference type="PANTHER" id="PTHR13243">
    <property type="entry name" value="HSPC111 PROTEIN-RELATED"/>
    <property type="match status" value="1"/>
</dbReference>
<dbReference type="PANTHER" id="PTHR13243:SF1">
    <property type="entry name" value="NUCLEOLAR PROTEIN 16"/>
    <property type="match status" value="1"/>
</dbReference>
<dbReference type="Pfam" id="PF09420">
    <property type="entry name" value="Nop16"/>
    <property type="match status" value="1"/>
</dbReference>